<proteinExistence type="inferred from homology"/>
<reference key="1">
    <citation type="journal article" date="2000" name="DNA Res.">
        <title>Complete genome structure of the nitrogen-fixing symbiotic bacterium Mesorhizobium loti.</title>
        <authorList>
            <person name="Kaneko T."/>
            <person name="Nakamura Y."/>
            <person name="Sato S."/>
            <person name="Asamizu E."/>
            <person name="Kato T."/>
            <person name="Sasamoto S."/>
            <person name="Watanabe A."/>
            <person name="Idesawa K."/>
            <person name="Ishikawa A."/>
            <person name="Kawashima K."/>
            <person name="Kimura T."/>
            <person name="Kishida Y."/>
            <person name="Kiyokawa C."/>
            <person name="Kohara M."/>
            <person name="Matsumoto M."/>
            <person name="Matsuno A."/>
            <person name="Mochizuki Y."/>
            <person name="Nakayama S."/>
            <person name="Nakazaki N."/>
            <person name="Shimpo S."/>
            <person name="Sugimoto M."/>
            <person name="Takeuchi C."/>
            <person name="Yamada M."/>
            <person name="Tabata S."/>
        </authorList>
    </citation>
    <scope>NUCLEOTIDE SEQUENCE [LARGE SCALE GENOMIC DNA]</scope>
    <source>
        <strain>LMG 29417 / CECT 9101 / MAFF 303099</strain>
    </source>
</reference>
<feature type="chain" id="PRO_0000100098" description="Putative 3-methyladenine DNA glycosylase">
    <location>
        <begin position="1"/>
        <end position="208"/>
    </location>
</feature>
<feature type="region of interest" description="Disordered" evidence="2">
    <location>
        <begin position="1"/>
        <end position="20"/>
    </location>
</feature>
<organism>
    <name type="scientific">Mesorhizobium japonicum (strain LMG 29417 / CECT 9101 / MAFF 303099)</name>
    <name type="common">Mesorhizobium loti (strain MAFF 303099)</name>
    <dbReference type="NCBI Taxonomy" id="266835"/>
    <lineage>
        <taxon>Bacteria</taxon>
        <taxon>Pseudomonadati</taxon>
        <taxon>Pseudomonadota</taxon>
        <taxon>Alphaproteobacteria</taxon>
        <taxon>Hyphomicrobiales</taxon>
        <taxon>Phyllobacteriaceae</taxon>
        <taxon>Mesorhizobium</taxon>
    </lineage>
</organism>
<gene>
    <name type="ordered locus">mll4583</name>
</gene>
<protein>
    <recommendedName>
        <fullName evidence="1">Putative 3-methyladenine DNA glycosylase</fullName>
        <ecNumber evidence="1">3.2.2.-</ecNumber>
    </recommendedName>
</protein>
<evidence type="ECO:0000255" key="1">
    <source>
        <dbReference type="HAMAP-Rule" id="MF_00527"/>
    </source>
</evidence>
<evidence type="ECO:0000256" key="2">
    <source>
        <dbReference type="SAM" id="MobiDB-lite"/>
    </source>
</evidence>
<keyword id="KW-0227">DNA damage</keyword>
<keyword id="KW-0234">DNA repair</keyword>
<keyword id="KW-0378">Hydrolase</keyword>
<sequence length="208" mass="22771">MGRAHTVSRGEDHPPIARSELPDDTAALARYLIGKLVVRDLPEGMVSGRIVETEAYVVGDAAGHGFRGMTPRNRSLFLERGHAYVYLAYGVSMMLNVSSEVPGIGTGVLIRALEPLDGIEIMRRNRGVERLRDLARGPGRLAAALRIDRSLDGLDLCRKGPLWLAKDNQKPGEIGQSTRIGITKDAARLLRFYVRGSLFVSGPRSLQE</sequence>
<dbReference type="EC" id="3.2.2.-" evidence="1"/>
<dbReference type="EMBL" id="BA000012">
    <property type="protein sequence ID" value="BAB51204.1"/>
    <property type="molecule type" value="Genomic_DNA"/>
</dbReference>
<dbReference type="RefSeq" id="WP_010912546.1">
    <property type="nucleotide sequence ID" value="NC_002678.2"/>
</dbReference>
<dbReference type="SMR" id="Q98DR6"/>
<dbReference type="KEGG" id="mlo:mll4583"/>
<dbReference type="PATRIC" id="fig|266835.9.peg.3619"/>
<dbReference type="eggNOG" id="COG2094">
    <property type="taxonomic scope" value="Bacteria"/>
</dbReference>
<dbReference type="HOGENOM" id="CLU_060471_3_2_5"/>
<dbReference type="Proteomes" id="UP000000552">
    <property type="component" value="Chromosome"/>
</dbReference>
<dbReference type="GO" id="GO:0003905">
    <property type="term" value="F:alkylbase DNA N-glycosylase activity"/>
    <property type="evidence" value="ECO:0007669"/>
    <property type="project" value="InterPro"/>
</dbReference>
<dbReference type="GO" id="GO:0003677">
    <property type="term" value="F:DNA binding"/>
    <property type="evidence" value="ECO:0007669"/>
    <property type="project" value="InterPro"/>
</dbReference>
<dbReference type="GO" id="GO:0006284">
    <property type="term" value="P:base-excision repair"/>
    <property type="evidence" value="ECO:0007669"/>
    <property type="project" value="InterPro"/>
</dbReference>
<dbReference type="CDD" id="cd00540">
    <property type="entry name" value="AAG"/>
    <property type="match status" value="1"/>
</dbReference>
<dbReference type="FunFam" id="3.10.300.10:FF:000001">
    <property type="entry name" value="Putative 3-methyladenine DNA glycosylase"/>
    <property type="match status" value="1"/>
</dbReference>
<dbReference type="Gene3D" id="3.10.300.10">
    <property type="entry name" value="Methylpurine-DNA glycosylase (MPG)"/>
    <property type="match status" value="1"/>
</dbReference>
<dbReference type="HAMAP" id="MF_00527">
    <property type="entry name" value="3MGH"/>
    <property type="match status" value="1"/>
</dbReference>
<dbReference type="InterPro" id="IPR011034">
    <property type="entry name" value="Formyl_transferase-like_C_sf"/>
</dbReference>
<dbReference type="InterPro" id="IPR003180">
    <property type="entry name" value="MPG"/>
</dbReference>
<dbReference type="InterPro" id="IPR036995">
    <property type="entry name" value="MPG_sf"/>
</dbReference>
<dbReference type="NCBIfam" id="TIGR00567">
    <property type="entry name" value="3mg"/>
    <property type="match status" value="1"/>
</dbReference>
<dbReference type="PANTHER" id="PTHR10429">
    <property type="entry name" value="DNA-3-METHYLADENINE GLYCOSYLASE"/>
    <property type="match status" value="1"/>
</dbReference>
<dbReference type="PANTHER" id="PTHR10429:SF0">
    <property type="entry name" value="DNA-3-METHYLADENINE GLYCOSYLASE"/>
    <property type="match status" value="1"/>
</dbReference>
<dbReference type="Pfam" id="PF02245">
    <property type="entry name" value="Pur_DNA_glyco"/>
    <property type="match status" value="1"/>
</dbReference>
<dbReference type="SUPFAM" id="SSF50486">
    <property type="entry name" value="FMT C-terminal domain-like"/>
    <property type="match status" value="1"/>
</dbReference>
<name>3MGH_RHILO</name>
<accession>Q98DR6</accession>
<comment type="similarity">
    <text evidence="1">Belongs to the DNA glycosylase MPG family.</text>
</comment>